<keyword id="KW-0963">Cytoplasm</keyword>
<keyword id="KW-1185">Reference proteome</keyword>
<feature type="chain" id="PRO_1000050022" description="Sulfur carrier protein TusA">
    <location>
        <begin position="1"/>
        <end position="81"/>
    </location>
</feature>
<feature type="active site" description="Cysteine persulfide intermediate" evidence="1">
    <location>
        <position position="19"/>
    </location>
</feature>
<sequence length="81" mass="9087">MNDAFSTAQHRLDALGLRCPEPVMMVRKTVRQMAAGETLLIIADDPATTRDIPSFCEFMDHTLIASETTQTPYQYLIKKGL</sequence>
<accession>A3CYJ2</accession>
<reference key="1">
    <citation type="submission" date="2007-02" db="EMBL/GenBank/DDBJ databases">
        <title>Complete sequence of chromosome of Shewanella baltica OS155.</title>
        <authorList>
            <consortium name="US DOE Joint Genome Institute"/>
            <person name="Copeland A."/>
            <person name="Lucas S."/>
            <person name="Lapidus A."/>
            <person name="Barry K."/>
            <person name="Detter J.C."/>
            <person name="Glavina del Rio T."/>
            <person name="Hammon N."/>
            <person name="Israni S."/>
            <person name="Dalin E."/>
            <person name="Tice H."/>
            <person name="Pitluck S."/>
            <person name="Sims D.R."/>
            <person name="Brettin T."/>
            <person name="Bruce D."/>
            <person name="Han C."/>
            <person name="Tapia R."/>
            <person name="Brainard J."/>
            <person name="Schmutz J."/>
            <person name="Larimer F."/>
            <person name="Land M."/>
            <person name="Hauser L."/>
            <person name="Kyrpides N."/>
            <person name="Mikhailova N."/>
            <person name="Brettar I."/>
            <person name="Klappenbach J."/>
            <person name="Konstantinidis K."/>
            <person name="Rodrigues J."/>
            <person name="Tiedje J."/>
            <person name="Richardson P."/>
        </authorList>
    </citation>
    <scope>NUCLEOTIDE SEQUENCE [LARGE SCALE GENOMIC DNA]</scope>
    <source>
        <strain>OS155 / ATCC BAA-1091</strain>
    </source>
</reference>
<evidence type="ECO:0000255" key="1">
    <source>
        <dbReference type="HAMAP-Rule" id="MF_00413"/>
    </source>
</evidence>
<gene>
    <name evidence="1" type="primary">tusA</name>
    <name type="ordered locus">Sbal_0018</name>
</gene>
<dbReference type="EMBL" id="CP000563">
    <property type="protein sequence ID" value="ABN59555.1"/>
    <property type="molecule type" value="Genomic_DNA"/>
</dbReference>
<dbReference type="RefSeq" id="WP_006083810.1">
    <property type="nucleotide sequence ID" value="NC_009052.1"/>
</dbReference>
<dbReference type="SMR" id="A3CYJ2"/>
<dbReference type="STRING" id="325240.Sbal_0018"/>
<dbReference type="GeneID" id="11770387"/>
<dbReference type="KEGG" id="sbl:Sbal_0018"/>
<dbReference type="HOGENOM" id="CLU_165255_5_0_6"/>
<dbReference type="OrthoDB" id="9797352at2"/>
<dbReference type="Proteomes" id="UP000001557">
    <property type="component" value="Chromosome"/>
</dbReference>
<dbReference type="GO" id="GO:0005737">
    <property type="term" value="C:cytoplasm"/>
    <property type="evidence" value="ECO:0007669"/>
    <property type="project" value="UniProtKB-SubCell"/>
</dbReference>
<dbReference type="GO" id="GO:0097163">
    <property type="term" value="F:sulfur carrier activity"/>
    <property type="evidence" value="ECO:0007669"/>
    <property type="project" value="UniProtKB-UniRule"/>
</dbReference>
<dbReference type="GO" id="GO:0002143">
    <property type="term" value="P:tRNA wobble position uridine thiolation"/>
    <property type="evidence" value="ECO:0007669"/>
    <property type="project" value="InterPro"/>
</dbReference>
<dbReference type="CDD" id="cd03423">
    <property type="entry name" value="SirA"/>
    <property type="match status" value="1"/>
</dbReference>
<dbReference type="Gene3D" id="3.30.110.40">
    <property type="entry name" value="TusA-like domain"/>
    <property type="match status" value="1"/>
</dbReference>
<dbReference type="HAMAP" id="MF_00413">
    <property type="entry name" value="Thiourid_synth_A"/>
    <property type="match status" value="1"/>
</dbReference>
<dbReference type="InterPro" id="IPR022931">
    <property type="entry name" value="Sulphur_carrier_TusA"/>
</dbReference>
<dbReference type="InterPro" id="IPR001455">
    <property type="entry name" value="TusA-like"/>
</dbReference>
<dbReference type="InterPro" id="IPR036868">
    <property type="entry name" value="TusA-like_sf"/>
</dbReference>
<dbReference type="NCBIfam" id="NF001423">
    <property type="entry name" value="PRK00299.1"/>
    <property type="match status" value="1"/>
</dbReference>
<dbReference type="PANTHER" id="PTHR33279:SF2">
    <property type="entry name" value="SULFUR CARRIER PROTEIN TUSA"/>
    <property type="match status" value="1"/>
</dbReference>
<dbReference type="PANTHER" id="PTHR33279">
    <property type="entry name" value="SULFUR CARRIER PROTEIN YEDF-RELATED"/>
    <property type="match status" value="1"/>
</dbReference>
<dbReference type="Pfam" id="PF01206">
    <property type="entry name" value="TusA"/>
    <property type="match status" value="1"/>
</dbReference>
<dbReference type="SUPFAM" id="SSF64307">
    <property type="entry name" value="SirA-like"/>
    <property type="match status" value="1"/>
</dbReference>
<dbReference type="PROSITE" id="PS01148">
    <property type="entry name" value="UPF0033"/>
    <property type="match status" value="1"/>
</dbReference>
<protein>
    <recommendedName>
        <fullName evidence="1">Sulfur carrier protein TusA</fullName>
    </recommendedName>
</protein>
<proteinExistence type="inferred from homology"/>
<name>TUSA_SHEB5</name>
<organism>
    <name type="scientific">Shewanella baltica (strain OS155 / ATCC BAA-1091)</name>
    <dbReference type="NCBI Taxonomy" id="325240"/>
    <lineage>
        <taxon>Bacteria</taxon>
        <taxon>Pseudomonadati</taxon>
        <taxon>Pseudomonadota</taxon>
        <taxon>Gammaproteobacteria</taxon>
        <taxon>Alteromonadales</taxon>
        <taxon>Shewanellaceae</taxon>
        <taxon>Shewanella</taxon>
    </lineage>
</organism>
<comment type="function">
    <text evidence="1">Sulfur carrier protein which probably makes part of a sulfur-relay system.</text>
</comment>
<comment type="subcellular location">
    <subcellularLocation>
        <location evidence="1">Cytoplasm</location>
    </subcellularLocation>
</comment>
<comment type="similarity">
    <text evidence="1">Belongs to the sulfur carrier protein TusA family.</text>
</comment>